<comment type="catalytic activity">
    <reaction evidence="1">
        <text>L-tryptophan + H2O = indole + pyruvate + NH4(+)</text>
        <dbReference type="Rhea" id="RHEA:19553"/>
        <dbReference type="ChEBI" id="CHEBI:15361"/>
        <dbReference type="ChEBI" id="CHEBI:15377"/>
        <dbReference type="ChEBI" id="CHEBI:16881"/>
        <dbReference type="ChEBI" id="CHEBI:28938"/>
        <dbReference type="ChEBI" id="CHEBI:57912"/>
        <dbReference type="EC" id="4.1.99.1"/>
    </reaction>
</comment>
<comment type="cofactor">
    <cofactor evidence="1">
        <name>pyridoxal 5'-phosphate</name>
        <dbReference type="ChEBI" id="CHEBI:597326"/>
    </cofactor>
</comment>
<comment type="pathway">
    <text evidence="1">Amino-acid degradation; L-tryptophan degradation via pyruvate pathway; indole and pyruvate from L-tryptophan: step 1/1.</text>
</comment>
<comment type="subunit">
    <text evidence="1">Homotetramer.</text>
</comment>
<comment type="similarity">
    <text evidence="1">Belongs to the beta-eliminating lyase family.</text>
</comment>
<dbReference type="EC" id="4.1.99.1" evidence="1"/>
<dbReference type="EMBL" id="CU928158">
    <property type="protein sequence ID" value="CAQ91438.1"/>
    <property type="molecule type" value="Genomic_DNA"/>
</dbReference>
<dbReference type="RefSeq" id="WP_015953902.1">
    <property type="nucleotide sequence ID" value="NC_011740.1"/>
</dbReference>
<dbReference type="SMR" id="B7LK50"/>
<dbReference type="GeneID" id="75059599"/>
<dbReference type="KEGG" id="efe:EFER_4004"/>
<dbReference type="HOGENOM" id="CLU_047223_0_0_6"/>
<dbReference type="OrthoDB" id="9764079at2"/>
<dbReference type="UniPathway" id="UPA00332">
    <property type="reaction ID" value="UER00452"/>
</dbReference>
<dbReference type="Proteomes" id="UP000000745">
    <property type="component" value="Chromosome"/>
</dbReference>
<dbReference type="GO" id="GO:0009034">
    <property type="term" value="F:tryptophanase activity"/>
    <property type="evidence" value="ECO:0007669"/>
    <property type="project" value="UniProtKB-UniRule"/>
</dbReference>
<dbReference type="FunFam" id="3.40.640.10:FF:000039">
    <property type="entry name" value="Tryptophanase"/>
    <property type="match status" value="1"/>
</dbReference>
<dbReference type="Gene3D" id="3.90.1150.10">
    <property type="entry name" value="Aspartate Aminotransferase, domain 1"/>
    <property type="match status" value="1"/>
</dbReference>
<dbReference type="Gene3D" id="3.40.640.10">
    <property type="entry name" value="Type I PLP-dependent aspartate aminotransferase-like (Major domain)"/>
    <property type="match status" value="1"/>
</dbReference>
<dbReference type="HAMAP" id="MF_00544">
    <property type="entry name" value="Tryptophanase"/>
    <property type="match status" value="1"/>
</dbReference>
<dbReference type="InterPro" id="IPR001597">
    <property type="entry name" value="ArAA_b-elim_lyase/Thr_aldolase"/>
</dbReference>
<dbReference type="InterPro" id="IPR011166">
    <property type="entry name" value="Beta-eliminating_lyase"/>
</dbReference>
<dbReference type="InterPro" id="IPR015424">
    <property type="entry name" value="PyrdxlP-dep_Trfase"/>
</dbReference>
<dbReference type="InterPro" id="IPR015421">
    <property type="entry name" value="PyrdxlP-dep_Trfase_major"/>
</dbReference>
<dbReference type="InterPro" id="IPR015422">
    <property type="entry name" value="PyrdxlP-dep_Trfase_small"/>
</dbReference>
<dbReference type="InterPro" id="IPR013440">
    <property type="entry name" value="TNase"/>
</dbReference>
<dbReference type="InterPro" id="IPR018176">
    <property type="entry name" value="Tryptophanase_CS"/>
</dbReference>
<dbReference type="NCBIfam" id="NF009709">
    <property type="entry name" value="PRK13238.1"/>
    <property type="match status" value="1"/>
</dbReference>
<dbReference type="NCBIfam" id="TIGR02617">
    <property type="entry name" value="tnaA_trp_ase"/>
    <property type="match status" value="1"/>
</dbReference>
<dbReference type="PANTHER" id="PTHR32325">
    <property type="entry name" value="BETA-ELIMINATING LYASE-LIKE PROTEIN-RELATED"/>
    <property type="match status" value="1"/>
</dbReference>
<dbReference type="PANTHER" id="PTHR32325:SF4">
    <property type="entry name" value="TRYPTOPHANASE"/>
    <property type="match status" value="1"/>
</dbReference>
<dbReference type="Pfam" id="PF01212">
    <property type="entry name" value="Beta_elim_lyase"/>
    <property type="match status" value="1"/>
</dbReference>
<dbReference type="PIRSF" id="PIRSF001386">
    <property type="entry name" value="Trpase"/>
    <property type="match status" value="1"/>
</dbReference>
<dbReference type="SUPFAM" id="SSF53383">
    <property type="entry name" value="PLP-dependent transferases"/>
    <property type="match status" value="1"/>
</dbReference>
<dbReference type="PROSITE" id="PS00853">
    <property type="entry name" value="BETA_ELIM_LYASE"/>
    <property type="match status" value="1"/>
</dbReference>
<reference key="1">
    <citation type="journal article" date="2009" name="PLoS Genet.">
        <title>Organised genome dynamics in the Escherichia coli species results in highly diverse adaptive paths.</title>
        <authorList>
            <person name="Touchon M."/>
            <person name="Hoede C."/>
            <person name="Tenaillon O."/>
            <person name="Barbe V."/>
            <person name="Baeriswyl S."/>
            <person name="Bidet P."/>
            <person name="Bingen E."/>
            <person name="Bonacorsi S."/>
            <person name="Bouchier C."/>
            <person name="Bouvet O."/>
            <person name="Calteau A."/>
            <person name="Chiapello H."/>
            <person name="Clermont O."/>
            <person name="Cruveiller S."/>
            <person name="Danchin A."/>
            <person name="Diard M."/>
            <person name="Dossat C."/>
            <person name="Karoui M.E."/>
            <person name="Frapy E."/>
            <person name="Garry L."/>
            <person name="Ghigo J.M."/>
            <person name="Gilles A.M."/>
            <person name="Johnson J."/>
            <person name="Le Bouguenec C."/>
            <person name="Lescat M."/>
            <person name="Mangenot S."/>
            <person name="Martinez-Jehanne V."/>
            <person name="Matic I."/>
            <person name="Nassif X."/>
            <person name="Oztas S."/>
            <person name="Petit M.A."/>
            <person name="Pichon C."/>
            <person name="Rouy Z."/>
            <person name="Ruf C.S."/>
            <person name="Schneider D."/>
            <person name="Tourret J."/>
            <person name="Vacherie B."/>
            <person name="Vallenet D."/>
            <person name="Medigue C."/>
            <person name="Rocha E.P.C."/>
            <person name="Denamur E."/>
        </authorList>
    </citation>
    <scope>NUCLEOTIDE SEQUENCE [LARGE SCALE GENOMIC DNA]</scope>
    <source>
        <strain>ATCC 35469 / DSM 13698 / BCRC 15582 / CCUG 18766 / IAM 14443 / JCM 21226 / LMG 7866 / NBRC 102419 / NCTC 12128 / CDC 0568-73</strain>
    </source>
</reference>
<sequence length="471" mass="52707">MENFKHLPEPFRIRVIEPVKRTTRAYREEAIIKSGMNPFLLDSEDVFIDLLTDSGTGAVTQSMQAAMMRGDEAYSGSRSYYALAESVKNIFGYQYTIPTHQGRGAEQIYIPVLIKKREQEKGLDRSKMVAFSNYFFDTTQGHSQINGCTVRNVYIKEAFDTGVRYDFKGNFDLEGLERGIEEVGPNNVPYIVATITSNSAGGQPVSLANLKAMYSIAKKYDIPVVMDSARFAENAYFIKQREAEYKDWTIEQITRETYKYADMLAMSAKKDAMVPMGGLLCVKDDSLFDVYTECRTLCVVQEGFPTYGGLEGGAMERLAVGLYDGMNLDWLAYRIAQVQYLVDGLEEIGVVCQQAGGHAAFVDAGKLLPHIPADQFPAQALACELYKVAGIRAVEIGSFLLGRDPKTGKQLPCPAELLRLTIPRATYTQTHMDFIIEAFKHVKENAANIKGLTFTYEPKVLRHFTAKLKEV</sequence>
<evidence type="ECO:0000255" key="1">
    <source>
        <dbReference type="HAMAP-Rule" id="MF_00544"/>
    </source>
</evidence>
<proteinExistence type="inferred from homology"/>
<organism>
    <name type="scientific">Escherichia fergusonii (strain ATCC 35469 / DSM 13698 / CCUG 18766 / IAM 14443 / JCM 21226 / LMG 7866 / NBRC 102419 / NCTC 12128 / CDC 0568-73)</name>
    <dbReference type="NCBI Taxonomy" id="585054"/>
    <lineage>
        <taxon>Bacteria</taxon>
        <taxon>Pseudomonadati</taxon>
        <taxon>Pseudomonadota</taxon>
        <taxon>Gammaproteobacteria</taxon>
        <taxon>Enterobacterales</taxon>
        <taxon>Enterobacteriaceae</taxon>
        <taxon>Escherichia</taxon>
    </lineage>
</organism>
<protein>
    <recommendedName>
        <fullName evidence="1">Tryptophanase</fullName>
        <ecNumber evidence="1">4.1.99.1</ecNumber>
    </recommendedName>
    <alternativeName>
        <fullName evidence="1">L-tryptophan indole-lyase</fullName>
        <shortName evidence="1">TNase</shortName>
    </alternativeName>
</protein>
<name>TNAA_ESCF3</name>
<feature type="chain" id="PRO_1000128914" description="Tryptophanase">
    <location>
        <begin position="1"/>
        <end position="471"/>
    </location>
</feature>
<feature type="modified residue" description="N6-acetyllysine" evidence="1">
    <location>
        <position position="5"/>
    </location>
</feature>
<feature type="modified residue" description="N6-acetyllysine" evidence="1">
    <location>
        <position position="115"/>
    </location>
</feature>
<feature type="modified residue" description="N6-acetyllysine" evidence="1">
    <location>
        <position position="156"/>
    </location>
</feature>
<feature type="modified residue" description="N6-(pyridoxal phosphate)lysine" evidence="1">
    <location>
        <position position="270"/>
    </location>
</feature>
<feature type="modified residue" description="N6-acetyllysine" evidence="1">
    <location>
        <position position="450"/>
    </location>
</feature>
<gene>
    <name evidence="1" type="primary">tnaA</name>
    <name type="ordered locus">EFER_4004</name>
</gene>
<accession>B7LK50</accession>
<keyword id="KW-0007">Acetylation</keyword>
<keyword id="KW-0456">Lyase</keyword>
<keyword id="KW-0663">Pyridoxal phosphate</keyword>
<keyword id="KW-0823">Tryptophan catabolism</keyword>